<name>ISPF_FRATM</name>
<sequence>MSFRIGHGYDVHKFTSAKQNIIIGGVEIAYHLGLEAHSDGDVLIHALCDAILGALGLGDIGKHFLDTDNQFKNIDSKFFLAEIKKMLDEKQYSISNIDCTIIAQAPKMLPHIEKMRACLANILEIQISQINIKATTTERLGFIGREEGIATHVVCLLYR</sequence>
<protein>
    <recommendedName>
        <fullName evidence="1">2-C-methyl-D-erythritol 2,4-cyclodiphosphate synthase</fullName>
        <shortName evidence="1">MECDP-synthase</shortName>
        <shortName evidence="1">MECPP-synthase</shortName>
        <shortName evidence="1">MECPS</shortName>
        <ecNumber evidence="1">4.6.1.12</ecNumber>
    </recommendedName>
</protein>
<evidence type="ECO:0000255" key="1">
    <source>
        <dbReference type="HAMAP-Rule" id="MF_00107"/>
    </source>
</evidence>
<feature type="chain" id="PRO_1000094265" description="2-C-methyl-D-erythritol 2,4-cyclodiphosphate synthase">
    <location>
        <begin position="1"/>
        <end position="159"/>
    </location>
</feature>
<feature type="binding site" evidence="1">
    <location>
        <begin position="10"/>
        <end position="12"/>
    </location>
    <ligand>
        <name>4-CDP-2-C-methyl-D-erythritol 2-phosphate</name>
        <dbReference type="ChEBI" id="CHEBI:57919"/>
    </ligand>
</feature>
<feature type="binding site" evidence="1">
    <location>
        <position position="10"/>
    </location>
    <ligand>
        <name>a divalent metal cation</name>
        <dbReference type="ChEBI" id="CHEBI:60240"/>
    </ligand>
</feature>
<feature type="binding site" evidence="1">
    <location>
        <position position="12"/>
    </location>
    <ligand>
        <name>a divalent metal cation</name>
        <dbReference type="ChEBI" id="CHEBI:60240"/>
    </ligand>
</feature>
<feature type="binding site" evidence="1">
    <location>
        <begin position="37"/>
        <end position="38"/>
    </location>
    <ligand>
        <name>4-CDP-2-C-methyl-D-erythritol 2-phosphate</name>
        <dbReference type="ChEBI" id="CHEBI:57919"/>
    </ligand>
</feature>
<feature type="binding site" evidence="1">
    <location>
        <position position="45"/>
    </location>
    <ligand>
        <name>a divalent metal cation</name>
        <dbReference type="ChEBI" id="CHEBI:60240"/>
    </ligand>
</feature>
<feature type="binding site" evidence="1">
    <location>
        <begin position="59"/>
        <end position="61"/>
    </location>
    <ligand>
        <name>4-CDP-2-C-methyl-D-erythritol 2-phosphate</name>
        <dbReference type="ChEBI" id="CHEBI:57919"/>
    </ligand>
</feature>
<feature type="binding site" evidence="1">
    <location>
        <begin position="64"/>
        <end position="68"/>
    </location>
    <ligand>
        <name>4-CDP-2-C-methyl-D-erythritol 2-phosphate</name>
        <dbReference type="ChEBI" id="CHEBI:57919"/>
    </ligand>
</feature>
<feature type="binding site" evidence="1">
    <location>
        <begin position="103"/>
        <end position="109"/>
    </location>
    <ligand>
        <name>4-CDP-2-C-methyl-D-erythritol 2-phosphate</name>
        <dbReference type="ChEBI" id="CHEBI:57919"/>
    </ligand>
</feature>
<feature type="binding site" evidence="1">
    <location>
        <begin position="135"/>
        <end position="138"/>
    </location>
    <ligand>
        <name>4-CDP-2-C-methyl-D-erythritol 2-phosphate</name>
        <dbReference type="ChEBI" id="CHEBI:57919"/>
    </ligand>
</feature>
<feature type="binding site" evidence="1">
    <location>
        <position position="142"/>
    </location>
    <ligand>
        <name>4-CDP-2-C-methyl-D-erythritol 2-phosphate</name>
        <dbReference type="ChEBI" id="CHEBI:57919"/>
    </ligand>
</feature>
<feature type="binding site" evidence="1">
    <location>
        <position position="145"/>
    </location>
    <ligand>
        <name>4-CDP-2-C-methyl-D-erythritol 2-phosphate</name>
        <dbReference type="ChEBI" id="CHEBI:57919"/>
    </ligand>
</feature>
<feature type="site" description="Transition state stabilizer" evidence="1">
    <location>
        <position position="37"/>
    </location>
</feature>
<feature type="site" description="Transition state stabilizer" evidence="1">
    <location>
        <position position="136"/>
    </location>
</feature>
<dbReference type="EC" id="4.6.1.12" evidence="1"/>
<dbReference type="EMBL" id="CP000915">
    <property type="protein sequence ID" value="ACD31148.1"/>
    <property type="molecule type" value="Genomic_DNA"/>
</dbReference>
<dbReference type="SMR" id="B2SDD4"/>
<dbReference type="KEGG" id="ftm:FTM_1296"/>
<dbReference type="HOGENOM" id="CLU_084630_2_0_6"/>
<dbReference type="UniPathway" id="UPA00056">
    <property type="reaction ID" value="UER00095"/>
</dbReference>
<dbReference type="GO" id="GO:0008685">
    <property type="term" value="F:2-C-methyl-D-erythritol 2,4-cyclodiphosphate synthase activity"/>
    <property type="evidence" value="ECO:0007669"/>
    <property type="project" value="UniProtKB-UniRule"/>
</dbReference>
<dbReference type="GO" id="GO:0046872">
    <property type="term" value="F:metal ion binding"/>
    <property type="evidence" value="ECO:0007669"/>
    <property type="project" value="UniProtKB-KW"/>
</dbReference>
<dbReference type="GO" id="GO:0019288">
    <property type="term" value="P:isopentenyl diphosphate biosynthetic process, methylerythritol 4-phosphate pathway"/>
    <property type="evidence" value="ECO:0007669"/>
    <property type="project" value="UniProtKB-UniRule"/>
</dbReference>
<dbReference type="GO" id="GO:0016114">
    <property type="term" value="P:terpenoid biosynthetic process"/>
    <property type="evidence" value="ECO:0007669"/>
    <property type="project" value="InterPro"/>
</dbReference>
<dbReference type="CDD" id="cd00554">
    <property type="entry name" value="MECDP_synthase"/>
    <property type="match status" value="1"/>
</dbReference>
<dbReference type="FunFam" id="3.30.1330.50:FF:000001">
    <property type="entry name" value="2-C-methyl-D-erythritol 2,4-cyclodiphosphate synthase"/>
    <property type="match status" value="1"/>
</dbReference>
<dbReference type="Gene3D" id="3.30.1330.50">
    <property type="entry name" value="2-C-methyl-D-erythritol 2,4-cyclodiphosphate synthase"/>
    <property type="match status" value="1"/>
</dbReference>
<dbReference type="HAMAP" id="MF_00107">
    <property type="entry name" value="IspF"/>
    <property type="match status" value="1"/>
</dbReference>
<dbReference type="InterPro" id="IPR003526">
    <property type="entry name" value="MECDP_synthase"/>
</dbReference>
<dbReference type="InterPro" id="IPR020555">
    <property type="entry name" value="MECDP_synthase_CS"/>
</dbReference>
<dbReference type="InterPro" id="IPR036571">
    <property type="entry name" value="MECDP_synthase_sf"/>
</dbReference>
<dbReference type="NCBIfam" id="TIGR00151">
    <property type="entry name" value="ispF"/>
    <property type="match status" value="1"/>
</dbReference>
<dbReference type="PANTHER" id="PTHR43181">
    <property type="entry name" value="2-C-METHYL-D-ERYTHRITOL 2,4-CYCLODIPHOSPHATE SYNTHASE, CHLOROPLASTIC"/>
    <property type="match status" value="1"/>
</dbReference>
<dbReference type="PANTHER" id="PTHR43181:SF1">
    <property type="entry name" value="2-C-METHYL-D-ERYTHRITOL 2,4-CYCLODIPHOSPHATE SYNTHASE, CHLOROPLASTIC"/>
    <property type="match status" value="1"/>
</dbReference>
<dbReference type="Pfam" id="PF02542">
    <property type="entry name" value="YgbB"/>
    <property type="match status" value="1"/>
</dbReference>
<dbReference type="SUPFAM" id="SSF69765">
    <property type="entry name" value="IpsF-like"/>
    <property type="match status" value="1"/>
</dbReference>
<dbReference type="PROSITE" id="PS01350">
    <property type="entry name" value="ISPF"/>
    <property type="match status" value="1"/>
</dbReference>
<reference key="1">
    <citation type="journal article" date="2009" name="PLoS Pathog.">
        <title>Molecular evolutionary consequences of niche restriction in Francisella tularensis, a facultative intracellular pathogen.</title>
        <authorList>
            <person name="Larsson P."/>
            <person name="Elfsmark D."/>
            <person name="Svensson K."/>
            <person name="Wikstroem P."/>
            <person name="Forsman M."/>
            <person name="Brettin T."/>
            <person name="Keim P."/>
            <person name="Johansson A."/>
        </authorList>
    </citation>
    <scope>NUCLEOTIDE SEQUENCE [LARGE SCALE GENOMIC DNA]</scope>
    <source>
        <strain>FSC147</strain>
    </source>
</reference>
<comment type="function">
    <text evidence="1">Involved in the biosynthesis of isopentenyl diphosphate (IPP) and dimethylallyl diphosphate (DMAPP), two major building blocks of isoprenoid compounds. Catalyzes the conversion of 4-diphosphocytidyl-2-C-methyl-D-erythritol 2-phosphate (CDP-ME2P) to 2-C-methyl-D-erythritol 2,4-cyclodiphosphate (ME-CPP) with a corresponding release of cytidine 5-monophosphate (CMP).</text>
</comment>
<comment type="catalytic activity">
    <reaction evidence="1">
        <text>4-CDP-2-C-methyl-D-erythritol 2-phosphate = 2-C-methyl-D-erythritol 2,4-cyclic diphosphate + CMP</text>
        <dbReference type="Rhea" id="RHEA:23864"/>
        <dbReference type="ChEBI" id="CHEBI:57919"/>
        <dbReference type="ChEBI" id="CHEBI:58483"/>
        <dbReference type="ChEBI" id="CHEBI:60377"/>
        <dbReference type="EC" id="4.6.1.12"/>
    </reaction>
</comment>
<comment type="cofactor">
    <cofactor evidence="1">
        <name>a divalent metal cation</name>
        <dbReference type="ChEBI" id="CHEBI:60240"/>
    </cofactor>
    <text evidence="1">Binds 1 divalent metal cation per subunit.</text>
</comment>
<comment type="pathway">
    <text evidence="1">Isoprenoid biosynthesis; isopentenyl diphosphate biosynthesis via DXP pathway; isopentenyl diphosphate from 1-deoxy-D-xylulose 5-phosphate: step 4/6.</text>
</comment>
<comment type="subunit">
    <text evidence="1">Homotrimer.</text>
</comment>
<comment type="similarity">
    <text evidence="1">Belongs to the IspF family.</text>
</comment>
<keyword id="KW-0414">Isoprene biosynthesis</keyword>
<keyword id="KW-0456">Lyase</keyword>
<keyword id="KW-0479">Metal-binding</keyword>
<proteinExistence type="inferred from homology"/>
<accession>B2SDD4</accession>
<organism>
    <name type="scientific">Francisella tularensis subsp. mediasiatica (strain FSC147)</name>
    <dbReference type="NCBI Taxonomy" id="441952"/>
    <lineage>
        <taxon>Bacteria</taxon>
        <taxon>Pseudomonadati</taxon>
        <taxon>Pseudomonadota</taxon>
        <taxon>Gammaproteobacteria</taxon>
        <taxon>Thiotrichales</taxon>
        <taxon>Francisellaceae</taxon>
        <taxon>Francisella</taxon>
    </lineage>
</organism>
<gene>
    <name evidence="1" type="primary">ispF</name>
    <name type="ordered locus">FTM_1296</name>
</gene>